<dbReference type="EMBL" id="U00096">
    <property type="protein sequence ID" value="AAC75048.3"/>
    <property type="molecule type" value="Genomic_DNA"/>
</dbReference>
<dbReference type="EMBL" id="AP009048">
    <property type="protein sequence ID" value="BAA15804.2"/>
    <property type="molecule type" value="Genomic_DNA"/>
</dbReference>
<dbReference type="PIR" id="B64963">
    <property type="entry name" value="B64963"/>
</dbReference>
<dbReference type="RefSeq" id="NP_416491.2">
    <property type="nucleotide sequence ID" value="NC_000913.3"/>
</dbReference>
<dbReference type="SMR" id="P76352"/>
<dbReference type="BioGRID" id="4259355">
    <property type="interactions" value="187"/>
</dbReference>
<dbReference type="FunCoup" id="P76352">
    <property type="interactions" value="180"/>
</dbReference>
<dbReference type="STRING" id="511145.b1985"/>
<dbReference type="TCDB" id="2.A.66.1.23">
    <property type="family name" value="the multidrug/oligosaccharidyl-lipid/polysaccharide (mop) flippase superfamily"/>
</dbReference>
<dbReference type="PaxDb" id="511145-b1985"/>
<dbReference type="EnsemblBacteria" id="AAC75048">
    <property type="protein sequence ID" value="AAC75048"/>
    <property type="gene ID" value="b1985"/>
</dbReference>
<dbReference type="GeneID" id="946506"/>
<dbReference type="KEGG" id="ecj:JW1965"/>
<dbReference type="KEGG" id="eco:b1985"/>
<dbReference type="PATRIC" id="fig|511145.12.peg.2062"/>
<dbReference type="EchoBASE" id="EB3164"/>
<dbReference type="eggNOG" id="COG0534">
    <property type="taxonomic scope" value="Bacteria"/>
</dbReference>
<dbReference type="HOGENOM" id="CLU_012893_5_3_6"/>
<dbReference type="InParanoid" id="P76352"/>
<dbReference type="OMA" id="KISHHHI"/>
<dbReference type="OrthoDB" id="62420at2"/>
<dbReference type="BioCyc" id="EcoCyc:YEEO-MONOMER"/>
<dbReference type="BioCyc" id="MetaCyc:YEEO-MONOMER"/>
<dbReference type="PRO" id="PR:P76352"/>
<dbReference type="Proteomes" id="UP000000625">
    <property type="component" value="Chromosome"/>
</dbReference>
<dbReference type="GO" id="GO:0016020">
    <property type="term" value="C:membrane"/>
    <property type="evidence" value="ECO:0000314"/>
    <property type="project" value="EcoCyc"/>
</dbReference>
<dbReference type="GO" id="GO:0005886">
    <property type="term" value="C:plasma membrane"/>
    <property type="evidence" value="ECO:0000314"/>
    <property type="project" value="EcoCyc"/>
</dbReference>
<dbReference type="GO" id="GO:0015297">
    <property type="term" value="F:antiporter activity"/>
    <property type="evidence" value="ECO:0007669"/>
    <property type="project" value="InterPro"/>
</dbReference>
<dbReference type="GO" id="GO:0071916">
    <property type="term" value="F:dipeptide transmembrane transporter activity"/>
    <property type="evidence" value="ECO:0000315"/>
    <property type="project" value="EcoCyc"/>
</dbReference>
<dbReference type="GO" id="GO:0015230">
    <property type="term" value="F:FAD transmembrane transporter activity"/>
    <property type="evidence" value="ECO:0000314"/>
    <property type="project" value="EcoCyc"/>
</dbReference>
<dbReference type="GO" id="GO:0044610">
    <property type="term" value="F:FMN transmembrane transporter activity"/>
    <property type="evidence" value="ECO:0000314"/>
    <property type="project" value="EcoCyc"/>
</dbReference>
<dbReference type="GO" id="GO:0042910">
    <property type="term" value="F:xenobiotic transmembrane transporter activity"/>
    <property type="evidence" value="ECO:0007669"/>
    <property type="project" value="InterPro"/>
</dbReference>
<dbReference type="GO" id="GO:0035442">
    <property type="term" value="P:dipeptide transmembrane transport"/>
    <property type="evidence" value="ECO:0000315"/>
    <property type="project" value="EcoCyc"/>
</dbReference>
<dbReference type="GO" id="GO:0035350">
    <property type="term" value="P:FAD transmembrane transport"/>
    <property type="evidence" value="ECO:0000314"/>
    <property type="project" value="EcoCyc"/>
</dbReference>
<dbReference type="GO" id="GO:0015031">
    <property type="term" value="P:protein transport"/>
    <property type="evidence" value="ECO:0007669"/>
    <property type="project" value="UniProtKB-KW"/>
</dbReference>
<dbReference type="CDD" id="cd13137">
    <property type="entry name" value="MATE_NorM_like"/>
    <property type="match status" value="1"/>
</dbReference>
<dbReference type="InterPro" id="IPR002528">
    <property type="entry name" value="MATE_fam"/>
</dbReference>
<dbReference type="InterPro" id="IPR050222">
    <property type="entry name" value="MATE_MdtK"/>
</dbReference>
<dbReference type="NCBIfam" id="TIGR00797">
    <property type="entry name" value="matE"/>
    <property type="match status" value="1"/>
</dbReference>
<dbReference type="NCBIfam" id="NF007562">
    <property type="entry name" value="PRK10189.1"/>
    <property type="match status" value="1"/>
</dbReference>
<dbReference type="PANTHER" id="PTHR43298:SF2">
    <property type="entry name" value="FMN_FAD EXPORTER YEEO-RELATED"/>
    <property type="match status" value="1"/>
</dbReference>
<dbReference type="PANTHER" id="PTHR43298">
    <property type="entry name" value="MULTIDRUG RESISTANCE PROTEIN NORM-RELATED"/>
    <property type="match status" value="1"/>
</dbReference>
<dbReference type="Pfam" id="PF01554">
    <property type="entry name" value="MatE"/>
    <property type="match status" value="2"/>
</dbReference>
<organism>
    <name type="scientific">Escherichia coli (strain K12)</name>
    <dbReference type="NCBI Taxonomy" id="83333"/>
    <lineage>
        <taxon>Bacteria</taxon>
        <taxon>Pseudomonadati</taxon>
        <taxon>Pseudomonadota</taxon>
        <taxon>Gammaproteobacteria</taxon>
        <taxon>Enterobacterales</taxon>
        <taxon>Enterobacteriaceae</taxon>
        <taxon>Escherichia</taxon>
    </lineage>
</organism>
<name>YEEO_ECOLI</name>
<protein>
    <recommendedName>
        <fullName>Probable FMN/FAD exporter YeeO</fullName>
    </recommendedName>
</protein>
<sequence length="547" mass="60061">MLRHILTAKNLLSNPIFKFPNCLPFLSTVCCICRQFVGENLCSFADSPSLFEMWFHFLQLRSALNISSALRQVVHGTRWHAKRKSYKVLFWREITPLAVPIFMENACVLLMGVLSTFLVSWLGKDAMAGVGLADSFNMVIMAFFAAIDLGTTVVVAFSLGKRDRRRARVATRQSLVIMTLFAVLLATLIHHFGEQIIDFVAGDATTEVKALALTYLELTVLSYPAAAITLIGSGALRGAGNTKIPLLINGSLNILNIIISGILIYGLFSWPGLGFVGAGLGLTISRYIGAVAILWVLAIGFNPALRISLKSYFKPLNFSIIWEVMGIGIPASVESVLFTSGRLLTQMFVAGMGTSVIAGNFIAFSIAALINLPGSALGSASTIITGRRLGVGQIAQAEIQLRHVFWLSTLGLTAIAWLTAPFAGVMASFYTQDPQVKHVVVILIWLNALFMPIWSASWVLPAGFKGARDARYAMWVSMLSMWGCRVVVGYVLGIMLGWGVVGVWMGMFADWAVRAVLFYWRMVTGRWLWKYPRPEPQKCEKKPVVSE</sequence>
<keyword id="KW-0997">Cell inner membrane</keyword>
<keyword id="KW-1003">Cell membrane</keyword>
<keyword id="KW-0274">FAD</keyword>
<keyword id="KW-0285">Flavoprotein</keyword>
<keyword id="KW-0288">FMN</keyword>
<keyword id="KW-0472">Membrane</keyword>
<keyword id="KW-0571">Peptide transport</keyword>
<keyword id="KW-0653">Protein transport</keyword>
<keyword id="KW-1185">Reference proteome</keyword>
<keyword id="KW-0812">Transmembrane</keyword>
<keyword id="KW-1133">Transmembrane helix</keyword>
<keyword id="KW-0813">Transport</keyword>
<comment type="function">
    <text evidence="2 3">A transporter able to export peptides and flavins. When overexpressed allows cells deleted for multiple peptidases (pepA, pepB, pepD and pepN) to grow in the presence of dipeptides Ala-Gln or Gly-Tyr which otherwise inhibit growth (PubMed:20067529). Cells overexpressing this protein have decreased intracellular levels of Ala-Gln dipeptide, and in a system that produces the Ala-Gln dipeptide, overproduction of this protein increases its export (PubMed:20067529). When overexpressed increases secretion of FMN and FAD but not riboflavin; intracellular concentrations of FMN and riboflavin rise, possibly to compensate for increased secretion (PubMed:25482085). Increased overexpression causes slight cell elongation (PubMed:25482085).</text>
</comment>
<comment type="subcellular location">
    <subcellularLocation>
        <location evidence="4">Cell inner membrane</location>
        <topology evidence="4">Multi-pass membrane protein</topology>
    </subcellularLocation>
</comment>
<comment type="similarity">
    <text evidence="4">Belongs to the multi antimicrobial extrusion (MATE) (TC 2.A.66.1) family.</text>
</comment>
<accession>P76352</accession>
<accession>P94752</accession>
<reference key="1">
    <citation type="journal article" date="1996" name="DNA Res.">
        <title>A 460-kb DNA sequence of the Escherichia coli K-12 genome corresponding to the 40.1-50.0 min region on the linkage map.</title>
        <authorList>
            <person name="Itoh T."/>
            <person name="Aiba H."/>
            <person name="Baba T."/>
            <person name="Fujita K."/>
            <person name="Hayashi K."/>
            <person name="Inada T."/>
            <person name="Isono K."/>
            <person name="Kasai H."/>
            <person name="Kimura S."/>
            <person name="Kitakawa M."/>
            <person name="Kitagawa M."/>
            <person name="Makino K."/>
            <person name="Miki T."/>
            <person name="Mizobuchi K."/>
            <person name="Mori H."/>
            <person name="Mori T."/>
            <person name="Motomura K."/>
            <person name="Nakade S."/>
            <person name="Nakamura Y."/>
            <person name="Nashimoto H."/>
            <person name="Nishio Y."/>
            <person name="Oshima T."/>
            <person name="Saito N."/>
            <person name="Sampei G."/>
            <person name="Seki Y."/>
            <person name="Sivasundaram S."/>
            <person name="Tagami H."/>
            <person name="Takeda J."/>
            <person name="Takemoto K."/>
            <person name="Wada C."/>
            <person name="Yamamoto Y."/>
            <person name="Horiuchi T."/>
        </authorList>
    </citation>
    <scope>NUCLEOTIDE SEQUENCE [LARGE SCALE GENOMIC DNA]</scope>
    <source>
        <strain>K12 / W3110 / ATCC 27325 / DSM 5911</strain>
    </source>
</reference>
<reference key="2">
    <citation type="journal article" date="1997" name="Science">
        <title>The complete genome sequence of Escherichia coli K-12.</title>
        <authorList>
            <person name="Blattner F.R."/>
            <person name="Plunkett G. III"/>
            <person name="Bloch C.A."/>
            <person name="Perna N.T."/>
            <person name="Burland V."/>
            <person name="Riley M."/>
            <person name="Collado-Vides J."/>
            <person name="Glasner J.D."/>
            <person name="Rode C.K."/>
            <person name="Mayhew G.F."/>
            <person name="Gregor J."/>
            <person name="Davis N.W."/>
            <person name="Kirkpatrick H.A."/>
            <person name="Goeden M.A."/>
            <person name="Rose D.J."/>
            <person name="Mau B."/>
            <person name="Shao Y."/>
        </authorList>
    </citation>
    <scope>NUCLEOTIDE SEQUENCE [LARGE SCALE GENOMIC DNA]</scope>
    <source>
        <strain>K12 / MG1655 / ATCC 47076</strain>
    </source>
</reference>
<reference key="3">
    <citation type="journal article" date="2006" name="Mol. Syst. Biol.">
        <title>Highly accurate genome sequences of Escherichia coli K-12 strains MG1655 and W3110.</title>
        <authorList>
            <person name="Hayashi K."/>
            <person name="Morooka N."/>
            <person name="Yamamoto Y."/>
            <person name="Fujita K."/>
            <person name="Isono K."/>
            <person name="Choi S."/>
            <person name="Ohtsubo E."/>
            <person name="Baba T."/>
            <person name="Wanner B.L."/>
            <person name="Mori H."/>
            <person name="Horiuchi T."/>
        </authorList>
    </citation>
    <scope>NUCLEOTIDE SEQUENCE [LARGE SCALE GENOMIC DNA]</scope>
    <source>
        <strain>K12 / W3110 / ATCC 27325 / DSM 5911</strain>
    </source>
</reference>
<reference key="4">
    <citation type="journal article" date="2010" name="FEMS Microbiol. Lett.">
        <title>Effect of multidrug-efflux transporter genes on dipeptide resistance and overproduction in Escherichia coli.</title>
        <authorList>
            <person name="Hayashi M."/>
            <person name="Tabata K."/>
            <person name="Yagasaki M."/>
            <person name="Yonetani Y."/>
        </authorList>
    </citation>
    <scope>FUNCTION IN DIPEPTIDE EXPORT</scope>
    <source>
        <strain>K12 / JM101 / ATCC 33876 / DSM 3948 / NCIMB 11926</strain>
    </source>
</reference>
<reference key="5">
    <citation type="journal article" date="2014" name="Bioengineered">
        <title>YeeO from Escherichia coli exports flavins.</title>
        <authorList>
            <person name="McAnulty M.J."/>
            <person name="Wood T.K."/>
        </authorList>
    </citation>
    <scope>FUNCTION IN FLAVIN EXPORT</scope>
    <source>
        <strain>K12 / BW25113</strain>
    </source>
</reference>
<proteinExistence type="evidence at protein level"/>
<evidence type="ECO:0000255" key="1"/>
<evidence type="ECO:0000269" key="2">
    <source>
    </source>
</evidence>
<evidence type="ECO:0000269" key="3">
    <source>
    </source>
</evidence>
<evidence type="ECO:0000305" key="4"/>
<feature type="chain" id="PRO_0000164253" description="Probable FMN/FAD exporter YeeO">
    <location>
        <begin position="1"/>
        <end position="547"/>
    </location>
</feature>
<feature type="transmembrane region" description="Helical" evidence="1">
    <location>
        <begin position="94"/>
        <end position="114"/>
    </location>
</feature>
<feature type="transmembrane region" description="Helical" evidence="1">
    <location>
        <begin position="139"/>
        <end position="159"/>
    </location>
</feature>
<feature type="transmembrane region" description="Helical" evidence="1">
    <location>
        <begin position="174"/>
        <end position="194"/>
    </location>
</feature>
<feature type="transmembrane region" description="Helical" evidence="1">
    <location>
        <begin position="211"/>
        <end position="231"/>
    </location>
</feature>
<feature type="transmembrane region" description="Helical" evidence="1">
    <location>
        <begin position="246"/>
        <end position="268"/>
    </location>
</feature>
<feature type="transmembrane region" description="Helical" evidence="1">
    <location>
        <begin position="281"/>
        <end position="301"/>
    </location>
</feature>
<feature type="transmembrane region" description="Helical" evidence="1">
    <location>
        <begin position="318"/>
        <end position="338"/>
    </location>
</feature>
<feature type="transmembrane region" description="Helical" evidence="1">
    <location>
        <begin position="350"/>
        <end position="370"/>
    </location>
</feature>
<feature type="transmembrane region" description="Helical" evidence="1">
    <location>
        <begin position="404"/>
        <end position="424"/>
    </location>
</feature>
<feature type="transmembrane region" description="Helical" evidence="1">
    <location>
        <begin position="439"/>
        <end position="459"/>
    </location>
</feature>
<feature type="transmembrane region" description="Helical" evidence="1">
    <location>
        <begin position="486"/>
        <end position="506"/>
    </location>
</feature>
<gene>
    <name type="primary">yeeO</name>
    <name type="ordered locus">b1985</name>
    <name type="ordered locus">JW1965</name>
</gene>